<evidence type="ECO:0000250" key="1"/>
<evidence type="ECO:0000250" key="2">
    <source>
        <dbReference type="UniProtKB" id="P09382"/>
    </source>
</evidence>
<evidence type="ECO:0000250" key="3">
    <source>
        <dbReference type="UniProtKB" id="P16045"/>
    </source>
</evidence>
<evidence type="ECO:0000255" key="4">
    <source>
        <dbReference type="PROSITE-ProRule" id="PRU00639"/>
    </source>
</evidence>
<evidence type="ECO:0007829" key="5">
    <source>
        <dbReference type="PDB" id="4NO4"/>
    </source>
</evidence>
<dbReference type="EMBL" id="M19036">
    <property type="protein sequence ID" value="AAA40822.1"/>
    <property type="molecule type" value="mRNA"/>
</dbReference>
<dbReference type="EMBL" id="BC058476">
    <property type="protein sequence ID" value="AAH58476.1"/>
    <property type="molecule type" value="mRNA"/>
</dbReference>
<dbReference type="PIR" id="A28703">
    <property type="entry name" value="LNRTGB"/>
</dbReference>
<dbReference type="RefSeq" id="NP_063969.1">
    <property type="nucleotide sequence ID" value="NM_019904.1"/>
</dbReference>
<dbReference type="PDB" id="3M2M">
    <property type="method" value="X-ray"/>
    <property type="resolution" value="2.95 A"/>
    <property type="chains" value="A/B/C/D/E/F/G/H=2-135"/>
</dbReference>
<dbReference type="PDB" id="4GA9">
    <property type="method" value="X-ray"/>
    <property type="resolution" value="1.88 A"/>
    <property type="chains" value="A/B=2-135"/>
</dbReference>
<dbReference type="PDB" id="4NO4">
    <property type="method" value="X-ray"/>
    <property type="resolution" value="1.40 A"/>
    <property type="chains" value="A/B/C/D/E/F=2-135"/>
</dbReference>
<dbReference type="PDBsum" id="3M2M"/>
<dbReference type="PDBsum" id="4GA9"/>
<dbReference type="PDBsum" id="4NO4"/>
<dbReference type="SMR" id="P11762"/>
<dbReference type="BioGRID" id="248567">
    <property type="interactions" value="1"/>
</dbReference>
<dbReference type="DIP" id="DIP-37188N"/>
<dbReference type="FunCoup" id="P11762">
    <property type="interactions" value="522"/>
</dbReference>
<dbReference type="IntAct" id="P11762">
    <property type="interactions" value="2"/>
</dbReference>
<dbReference type="STRING" id="10116.ENSRNOP00000013538"/>
<dbReference type="BindingDB" id="P11762"/>
<dbReference type="ChEMBL" id="CHEMBL4523183"/>
<dbReference type="UniLectin" id="P11762"/>
<dbReference type="iPTMnet" id="P11762"/>
<dbReference type="PhosphoSitePlus" id="P11762"/>
<dbReference type="jPOST" id="P11762"/>
<dbReference type="PaxDb" id="10116-ENSRNOP00000013538"/>
<dbReference type="Ensembl" id="ENSRNOT00000013538.7">
    <property type="protein sequence ID" value="ENSRNOP00000013538.5"/>
    <property type="gene ID" value="ENSRNOG00000009884.7"/>
</dbReference>
<dbReference type="GeneID" id="56646"/>
<dbReference type="KEGG" id="rno:56646"/>
<dbReference type="UCSC" id="RGD:69355">
    <property type="organism name" value="rat"/>
</dbReference>
<dbReference type="AGR" id="RGD:69355"/>
<dbReference type="CTD" id="3956"/>
<dbReference type="RGD" id="69355">
    <property type="gene designation" value="Lgals1"/>
</dbReference>
<dbReference type="eggNOG" id="KOG3587">
    <property type="taxonomic scope" value="Eukaryota"/>
</dbReference>
<dbReference type="GeneTree" id="ENSGT00940000155534"/>
<dbReference type="HOGENOM" id="CLU_037794_5_0_1"/>
<dbReference type="InParanoid" id="P11762"/>
<dbReference type="OrthoDB" id="1644at9989"/>
<dbReference type="PhylomeDB" id="P11762"/>
<dbReference type="Reactome" id="R-RNO-381426">
    <property type="pathway name" value="Regulation of Insulin-like Growth Factor (IGF) transport and uptake by Insulin-like Growth Factor Binding Proteins (IGFBPs)"/>
</dbReference>
<dbReference type="Reactome" id="R-RNO-8957275">
    <property type="pathway name" value="Post-translational protein phosphorylation"/>
</dbReference>
<dbReference type="EvolutionaryTrace" id="P11762"/>
<dbReference type="PRO" id="PR:P11762"/>
<dbReference type="Proteomes" id="UP000002494">
    <property type="component" value="Chromosome 7"/>
</dbReference>
<dbReference type="Bgee" id="ENSRNOG00000009884">
    <property type="expression patterns" value="Expressed in ovary and 20 other cell types or tissues"/>
</dbReference>
<dbReference type="GO" id="GO:0009986">
    <property type="term" value="C:cell surface"/>
    <property type="evidence" value="ECO:0000314"/>
    <property type="project" value="RGD"/>
</dbReference>
<dbReference type="GO" id="GO:0005737">
    <property type="term" value="C:cytoplasm"/>
    <property type="evidence" value="ECO:0007669"/>
    <property type="project" value="UniProtKB-SubCell"/>
</dbReference>
<dbReference type="GO" id="GO:0005615">
    <property type="term" value="C:extracellular space"/>
    <property type="evidence" value="ECO:0000266"/>
    <property type="project" value="RGD"/>
</dbReference>
<dbReference type="GO" id="GO:1990724">
    <property type="term" value="C:galectin complex"/>
    <property type="evidence" value="ECO:0000266"/>
    <property type="project" value="RGD"/>
</dbReference>
<dbReference type="GO" id="GO:0005886">
    <property type="term" value="C:plasma membrane"/>
    <property type="evidence" value="ECO:0000266"/>
    <property type="project" value="RGD"/>
</dbReference>
<dbReference type="GO" id="GO:0030246">
    <property type="term" value="F:carbohydrate binding"/>
    <property type="evidence" value="ECO:0000266"/>
    <property type="project" value="RGD"/>
</dbReference>
<dbReference type="GO" id="GO:0042802">
    <property type="term" value="F:identical protein binding"/>
    <property type="evidence" value="ECO:0000353"/>
    <property type="project" value="RGD"/>
</dbReference>
<dbReference type="GO" id="GO:0030395">
    <property type="term" value="F:lactose binding"/>
    <property type="evidence" value="ECO:0000314"/>
    <property type="project" value="RGD"/>
</dbReference>
<dbReference type="GO" id="GO:0043236">
    <property type="term" value="F:laminin binding"/>
    <property type="evidence" value="ECO:0000314"/>
    <property type="project" value="RGD"/>
</dbReference>
<dbReference type="GO" id="GO:0048018">
    <property type="term" value="F:receptor ligand activity"/>
    <property type="evidence" value="ECO:0000266"/>
    <property type="project" value="RGD"/>
</dbReference>
<dbReference type="GO" id="GO:0006915">
    <property type="term" value="P:apoptotic process"/>
    <property type="evidence" value="ECO:0007669"/>
    <property type="project" value="UniProtKB-KW"/>
</dbReference>
<dbReference type="GO" id="GO:0098609">
    <property type="term" value="P:cell-cell adhesion"/>
    <property type="evidence" value="ECO:0000266"/>
    <property type="project" value="RGD"/>
</dbReference>
<dbReference type="GO" id="GO:0071333">
    <property type="term" value="P:cellular response to glucose stimulus"/>
    <property type="evidence" value="ECO:0000270"/>
    <property type="project" value="RGD"/>
</dbReference>
<dbReference type="GO" id="GO:0045445">
    <property type="term" value="P:myoblast differentiation"/>
    <property type="evidence" value="ECO:0000266"/>
    <property type="project" value="RGD"/>
</dbReference>
<dbReference type="GO" id="GO:0010812">
    <property type="term" value="P:negative regulation of cell-substrate adhesion"/>
    <property type="evidence" value="ECO:0000314"/>
    <property type="project" value="RGD"/>
</dbReference>
<dbReference type="GO" id="GO:0010977">
    <property type="term" value="P:negative regulation of neuron projection development"/>
    <property type="evidence" value="ECO:0000315"/>
    <property type="project" value="RGD"/>
</dbReference>
<dbReference type="GO" id="GO:2000329">
    <property type="term" value="P:negative regulation of T-helper 17 cell lineage commitment"/>
    <property type="evidence" value="ECO:0000266"/>
    <property type="project" value="RGD"/>
</dbReference>
<dbReference type="GO" id="GO:0002317">
    <property type="term" value="P:plasma cell differentiation"/>
    <property type="evidence" value="ECO:0000266"/>
    <property type="project" value="RGD"/>
</dbReference>
<dbReference type="GO" id="GO:0043065">
    <property type="term" value="P:positive regulation of apoptotic process"/>
    <property type="evidence" value="ECO:0000266"/>
    <property type="project" value="RGD"/>
</dbReference>
<dbReference type="GO" id="GO:0034120">
    <property type="term" value="P:positive regulation of erythrocyte aggregation"/>
    <property type="evidence" value="ECO:0000314"/>
    <property type="project" value="RGD"/>
</dbReference>
<dbReference type="GO" id="GO:0050729">
    <property type="term" value="P:positive regulation of inflammatory response"/>
    <property type="evidence" value="ECO:0000266"/>
    <property type="project" value="RGD"/>
</dbReference>
<dbReference type="GO" id="GO:0046598">
    <property type="term" value="P:positive regulation of viral entry into host cell"/>
    <property type="evidence" value="ECO:0000266"/>
    <property type="project" value="RGD"/>
</dbReference>
<dbReference type="GO" id="GO:0048678">
    <property type="term" value="P:response to axon injury"/>
    <property type="evidence" value="ECO:0000270"/>
    <property type="project" value="RGD"/>
</dbReference>
<dbReference type="GO" id="GO:0035900">
    <property type="term" value="P:response to isolation stress"/>
    <property type="evidence" value="ECO:0000270"/>
    <property type="project" value="RGD"/>
</dbReference>
<dbReference type="GO" id="GO:0009410">
    <property type="term" value="P:response to xenobiotic stimulus"/>
    <property type="evidence" value="ECO:0000270"/>
    <property type="project" value="RGD"/>
</dbReference>
<dbReference type="GO" id="GO:0031295">
    <property type="term" value="P:T cell costimulation"/>
    <property type="evidence" value="ECO:0000266"/>
    <property type="project" value="RGD"/>
</dbReference>
<dbReference type="CDD" id="cd00070">
    <property type="entry name" value="GLECT"/>
    <property type="match status" value="1"/>
</dbReference>
<dbReference type="FunFam" id="2.60.120.200:FF:000021">
    <property type="entry name" value="Galectin"/>
    <property type="match status" value="1"/>
</dbReference>
<dbReference type="Gene3D" id="2.60.120.200">
    <property type="match status" value="1"/>
</dbReference>
<dbReference type="InterPro" id="IPR013320">
    <property type="entry name" value="ConA-like_dom_sf"/>
</dbReference>
<dbReference type="InterPro" id="IPR044156">
    <property type="entry name" value="Galectin-like"/>
</dbReference>
<dbReference type="InterPro" id="IPR001079">
    <property type="entry name" value="Galectin_CRD"/>
</dbReference>
<dbReference type="PANTHER" id="PTHR11346">
    <property type="entry name" value="GALECTIN"/>
    <property type="match status" value="1"/>
</dbReference>
<dbReference type="PANTHER" id="PTHR11346:SF97">
    <property type="entry name" value="GALECTIN-1"/>
    <property type="match status" value="1"/>
</dbReference>
<dbReference type="Pfam" id="PF00337">
    <property type="entry name" value="Gal-bind_lectin"/>
    <property type="match status" value="1"/>
</dbReference>
<dbReference type="SMART" id="SM00908">
    <property type="entry name" value="Gal-bind_lectin"/>
    <property type="match status" value="1"/>
</dbReference>
<dbReference type="SMART" id="SM00276">
    <property type="entry name" value="GLECT"/>
    <property type="match status" value="1"/>
</dbReference>
<dbReference type="SUPFAM" id="SSF49899">
    <property type="entry name" value="Concanavalin A-like lectins/glucanases"/>
    <property type="match status" value="1"/>
</dbReference>
<dbReference type="PROSITE" id="PS51304">
    <property type="entry name" value="GALECTIN"/>
    <property type="match status" value="1"/>
</dbReference>
<sequence length="135" mass="14857">MACGLVASNLNLKPGECLKVRGELAPDAKSFVLNLGKDSNNLCLHFNPRFNAHGDANTIVCNSKDDGTWGTEQRETAFPFQPGSITEVCITFDQADLTIKLPDGHEFKFPNRLNMEAINYMAADGDFKIKCVAFE</sequence>
<name>LEG1_RAT</name>
<proteinExistence type="evidence at protein level"/>
<protein>
    <recommendedName>
        <fullName>Galectin-1</fullName>
        <shortName>Gal-1</shortName>
    </recommendedName>
    <alternativeName>
        <fullName>14 kDa lectin</fullName>
    </alternativeName>
    <alternativeName>
        <fullName>Beta-galactoside-binding lectin L-14-I</fullName>
    </alternativeName>
    <alternativeName>
        <fullName>Galaptin</fullName>
    </alternativeName>
    <alternativeName>
        <fullName>Lactose-binding lectin 1</fullName>
    </alternativeName>
    <alternativeName>
        <fullName>Lectin galactoside-binding soluble 1</fullName>
    </alternativeName>
    <alternativeName>
        <fullName>RL 14.5</fullName>
    </alternativeName>
    <alternativeName>
        <fullName>S-Lac lectin 1</fullName>
    </alternativeName>
</protein>
<comment type="function">
    <text evidence="2">Lectin that binds beta-galactoside and a wide array of complex carbohydrates. Plays a role in regulating apoptosis, cell proliferation and cell differentiation. Inhibits CD45 protein phosphatase activity and therefore the dephosphorylation of Lyn kinase. Strong inducer of T-cell apoptosis. Plays a negative role in Th17 cell differentiation via activation of the receptor CD69.</text>
</comment>
<comment type="subunit">
    <text evidence="2">Homodimer. Binds LGALS3BP. Interacts with CD2, CD3, CD4, CD6, CD7, CD43, ALCAM and CD45. Interacts with laminin (via poly-N-acetyllactosamine). Interacts with SUSD2. Interacts with cargo receptor TMED10; the interaction mediates the translocation from the cytoplasm into the ERGIC (endoplasmic reticulum-Golgi intermediate compartment) and thereby secretion. Interacts with CD69.</text>
</comment>
<comment type="subcellular location">
    <subcellularLocation>
        <location evidence="2">Secreted</location>
        <location evidence="2">Extracellular space</location>
        <location evidence="2">Extracellular matrix</location>
    </subcellularLocation>
    <subcellularLocation>
        <location evidence="2">Cytoplasm</location>
    </subcellularLocation>
    <subcellularLocation>
        <location evidence="2">Secreted</location>
    </subcellularLocation>
    <text evidence="2">Can be secreted; the secretion is dependent on protein unfolding and facilitated by the cargo receptor TMED10; it results in protein translocation from the cytoplasm into the ERGIC (endoplasmic reticulum-Golgi intermediate compartment) followed by vesicle entry and secretion.</text>
</comment>
<accession>P11762</accession>
<organism>
    <name type="scientific">Rattus norvegicus</name>
    <name type="common">Rat</name>
    <dbReference type="NCBI Taxonomy" id="10116"/>
    <lineage>
        <taxon>Eukaryota</taxon>
        <taxon>Metazoa</taxon>
        <taxon>Chordata</taxon>
        <taxon>Craniata</taxon>
        <taxon>Vertebrata</taxon>
        <taxon>Euteleostomi</taxon>
        <taxon>Mammalia</taxon>
        <taxon>Eutheria</taxon>
        <taxon>Euarchontoglires</taxon>
        <taxon>Glires</taxon>
        <taxon>Rodentia</taxon>
        <taxon>Myomorpha</taxon>
        <taxon>Muroidea</taxon>
        <taxon>Muridae</taxon>
        <taxon>Murinae</taxon>
        <taxon>Rattus</taxon>
    </lineage>
</organism>
<reference key="1">
    <citation type="journal article" date="1988" name="Biochemistry">
        <title>Sequence of a full-length cDNA for rat lung beta-galactoside-binding protein: primary and secondary structure of the lectin.</title>
        <authorList>
            <person name="Clerch L.B."/>
            <person name="Whitney P."/>
            <person name="Hass M."/>
            <person name="Brew K."/>
            <person name="Miller T."/>
            <person name="Werner R."/>
            <person name="Massaro D."/>
        </authorList>
    </citation>
    <scope>NUCLEOTIDE SEQUENCE [MRNA]</scope>
</reference>
<reference key="2">
    <citation type="journal article" date="1990" name="J. Neurosci.">
        <title>Selective expression of an endogenous lactose-binding lectin gene in subsets of central and peripheral neurons.</title>
        <authorList>
            <person name="Hynes M.A."/>
            <person name="Gitt M."/>
            <person name="Barondes S.H."/>
            <person name="Jessell T.M."/>
            <person name="Buck L.B."/>
        </authorList>
    </citation>
    <scope>NUCLEOTIDE SEQUENCE [MRNA]</scope>
    <source>
        <tissue>Brain</tissue>
    </source>
</reference>
<reference key="3">
    <citation type="journal article" date="2004" name="Genome Res.">
        <title>The status, quality, and expansion of the NIH full-length cDNA project: the Mammalian Gene Collection (MGC).</title>
        <authorList>
            <consortium name="The MGC Project Team"/>
        </authorList>
    </citation>
    <scope>NUCLEOTIDE SEQUENCE [LARGE SCALE MRNA]</scope>
    <source>
        <tissue>Pituitary</tissue>
    </source>
</reference>
<reference key="4">
    <citation type="submission" date="2006-11" db="UniProtKB">
        <authorList>
            <person name="Lubec G."/>
            <person name="Afjehi-Sadat L."/>
        </authorList>
    </citation>
    <scope>PROTEIN SEQUENCE OF 38-49</scope>
    <scope>IDENTIFICATION BY MASS SPECTROMETRY</scope>
    <source>
        <strain>Sprague-Dawley</strain>
        <tissue>Spinal cord</tissue>
    </source>
</reference>
<feature type="initiator methionine" description="Removed" evidence="2">
    <location>
        <position position="1"/>
    </location>
</feature>
<feature type="chain" id="PRO_0000076920" description="Galectin-1">
    <location>
        <begin position="2"/>
        <end position="135"/>
    </location>
</feature>
<feature type="domain" description="Galectin" evidence="4">
    <location>
        <begin position="4"/>
        <end position="135"/>
    </location>
</feature>
<feature type="binding site" evidence="1">
    <location>
        <begin position="45"/>
        <end position="49"/>
    </location>
    <ligand>
        <name>a beta-D-galactoside</name>
        <dbReference type="ChEBI" id="CHEBI:28034"/>
    </ligand>
</feature>
<feature type="binding site" evidence="1">
    <location>
        <position position="53"/>
    </location>
    <ligand>
        <name>a beta-D-galactoside</name>
        <dbReference type="ChEBI" id="CHEBI:28034"/>
    </ligand>
</feature>
<feature type="binding site" evidence="1">
    <location>
        <position position="62"/>
    </location>
    <ligand>
        <name>a beta-D-galactoside</name>
        <dbReference type="ChEBI" id="CHEBI:28034"/>
    </ligand>
</feature>
<feature type="binding site" evidence="1">
    <location>
        <begin position="69"/>
        <end position="72"/>
    </location>
    <ligand>
        <name>a beta-D-galactoside</name>
        <dbReference type="ChEBI" id="CHEBI:28034"/>
    </ligand>
</feature>
<feature type="modified residue" description="N-acetylalanine" evidence="2">
    <location>
        <position position="2"/>
    </location>
</feature>
<feature type="modified residue" description="N6-acetyllysine" evidence="3">
    <location>
        <position position="13"/>
    </location>
</feature>
<feature type="modified residue" description="N6-acetyllysine" evidence="3">
    <location>
        <position position="19"/>
    </location>
</feature>
<feature type="modified residue" description="N6-acetyllysine" evidence="2">
    <location>
        <position position="29"/>
    </location>
</feature>
<feature type="modified residue" description="Phosphoserine" evidence="2">
    <location>
        <position position="30"/>
    </location>
</feature>
<feature type="modified residue" description="N6-acetyllysine; alternate" evidence="3">
    <location>
        <position position="108"/>
    </location>
</feature>
<feature type="modified residue" description="N6-succinyllysine; alternate" evidence="3">
    <location>
        <position position="108"/>
    </location>
</feature>
<feature type="modified residue" description="N6-acetyllysine" evidence="3">
    <location>
        <position position="128"/>
    </location>
</feature>
<feature type="strand" evidence="5">
    <location>
        <begin position="4"/>
        <end position="7"/>
    </location>
</feature>
<feature type="strand" evidence="5">
    <location>
        <begin position="17"/>
        <end position="24"/>
    </location>
</feature>
<feature type="strand" evidence="5">
    <location>
        <begin position="30"/>
        <end position="38"/>
    </location>
</feature>
<feature type="strand" evidence="5">
    <location>
        <begin position="41"/>
        <end position="52"/>
    </location>
</feature>
<feature type="strand" evidence="5">
    <location>
        <begin position="55"/>
        <end position="65"/>
    </location>
</feature>
<feature type="strand" evidence="5">
    <location>
        <begin position="73"/>
        <end position="75"/>
    </location>
</feature>
<feature type="strand" evidence="5">
    <location>
        <begin position="84"/>
        <end position="92"/>
    </location>
</feature>
<feature type="strand" evidence="5">
    <location>
        <begin position="94"/>
        <end position="100"/>
    </location>
</feature>
<feature type="strand" evidence="5">
    <location>
        <begin position="106"/>
        <end position="110"/>
    </location>
</feature>
<feature type="strand" evidence="5">
    <location>
        <begin position="120"/>
        <end position="135"/>
    </location>
</feature>
<gene>
    <name type="primary">Lgals1</name>
</gene>
<keyword id="KW-0002">3D-structure</keyword>
<keyword id="KW-0007">Acetylation</keyword>
<keyword id="KW-0053">Apoptosis</keyword>
<keyword id="KW-0963">Cytoplasm</keyword>
<keyword id="KW-0903">Direct protein sequencing</keyword>
<keyword id="KW-0272">Extracellular matrix</keyword>
<keyword id="KW-0430">Lectin</keyword>
<keyword id="KW-0597">Phosphoprotein</keyword>
<keyword id="KW-1185">Reference proteome</keyword>
<keyword id="KW-0964">Secreted</keyword>